<sequence>MAKLTKRMRVIRDKVDVTKQYDINEAVALLKELATAKFVESVDVAVNLGIDARKSDQNVRGATVLPHGTGRSVRVAVFAQGANAEAAKEAGAELVGMDDLADQIKKGEMNFDVVIASPDAMRVVGQLGQILGPRGLMPNPKVGTVTPNVAEAVKNAKAGQVRYRNDKNGIIHTTIGKVDFDSDKLKENLESLVVALKKAKPATAKGIYIKKISLSTTMGAGVAIDQSGLTAVVN</sequence>
<keyword id="KW-0678">Repressor</keyword>
<keyword id="KW-0687">Ribonucleoprotein</keyword>
<keyword id="KW-0689">Ribosomal protein</keyword>
<keyword id="KW-0694">RNA-binding</keyword>
<keyword id="KW-0699">rRNA-binding</keyword>
<keyword id="KW-0810">Translation regulation</keyword>
<keyword id="KW-0820">tRNA-binding</keyword>
<protein>
    <recommendedName>
        <fullName evidence="1">Large ribosomal subunit protein uL1</fullName>
    </recommendedName>
    <alternativeName>
        <fullName evidence="2">50S ribosomal protein L1</fullName>
    </alternativeName>
</protein>
<gene>
    <name evidence="1" type="primary">rplA</name>
    <name type="ordered locus">YPTB0280</name>
</gene>
<evidence type="ECO:0000255" key="1">
    <source>
        <dbReference type="HAMAP-Rule" id="MF_01318"/>
    </source>
</evidence>
<evidence type="ECO:0000305" key="2"/>
<dbReference type="EMBL" id="BX936398">
    <property type="protein sequence ID" value="CAH19520.1"/>
    <property type="molecule type" value="Genomic_DNA"/>
</dbReference>
<dbReference type="RefSeq" id="WP_002210673.1">
    <property type="nucleotide sequence ID" value="NZ_CP009712.1"/>
</dbReference>
<dbReference type="SMR" id="Q66FQ5"/>
<dbReference type="GeneID" id="57974968"/>
<dbReference type="KEGG" id="ypo:BZ17_2294"/>
<dbReference type="KEGG" id="yps:YPTB0280"/>
<dbReference type="PATRIC" id="fig|273123.14.peg.2426"/>
<dbReference type="Proteomes" id="UP000001011">
    <property type="component" value="Chromosome"/>
</dbReference>
<dbReference type="GO" id="GO:0022625">
    <property type="term" value="C:cytosolic large ribosomal subunit"/>
    <property type="evidence" value="ECO:0007669"/>
    <property type="project" value="TreeGrafter"/>
</dbReference>
<dbReference type="GO" id="GO:0019843">
    <property type="term" value="F:rRNA binding"/>
    <property type="evidence" value="ECO:0007669"/>
    <property type="project" value="UniProtKB-UniRule"/>
</dbReference>
<dbReference type="GO" id="GO:0003735">
    <property type="term" value="F:structural constituent of ribosome"/>
    <property type="evidence" value="ECO:0007669"/>
    <property type="project" value="InterPro"/>
</dbReference>
<dbReference type="GO" id="GO:0000049">
    <property type="term" value="F:tRNA binding"/>
    <property type="evidence" value="ECO:0007669"/>
    <property type="project" value="UniProtKB-KW"/>
</dbReference>
<dbReference type="GO" id="GO:0006417">
    <property type="term" value="P:regulation of translation"/>
    <property type="evidence" value="ECO:0007669"/>
    <property type="project" value="UniProtKB-KW"/>
</dbReference>
<dbReference type="GO" id="GO:0006412">
    <property type="term" value="P:translation"/>
    <property type="evidence" value="ECO:0007669"/>
    <property type="project" value="UniProtKB-UniRule"/>
</dbReference>
<dbReference type="CDD" id="cd00403">
    <property type="entry name" value="Ribosomal_L1"/>
    <property type="match status" value="1"/>
</dbReference>
<dbReference type="FunFam" id="3.40.50.790:FF:000001">
    <property type="entry name" value="50S ribosomal protein L1"/>
    <property type="match status" value="1"/>
</dbReference>
<dbReference type="Gene3D" id="3.30.190.20">
    <property type="match status" value="1"/>
</dbReference>
<dbReference type="Gene3D" id="3.40.50.790">
    <property type="match status" value="1"/>
</dbReference>
<dbReference type="HAMAP" id="MF_01318_B">
    <property type="entry name" value="Ribosomal_uL1_B"/>
    <property type="match status" value="1"/>
</dbReference>
<dbReference type="InterPro" id="IPR005878">
    <property type="entry name" value="Ribosom_uL1_bac-type"/>
</dbReference>
<dbReference type="InterPro" id="IPR002143">
    <property type="entry name" value="Ribosomal_uL1"/>
</dbReference>
<dbReference type="InterPro" id="IPR023674">
    <property type="entry name" value="Ribosomal_uL1-like"/>
</dbReference>
<dbReference type="InterPro" id="IPR028364">
    <property type="entry name" value="Ribosomal_uL1/biogenesis"/>
</dbReference>
<dbReference type="InterPro" id="IPR016095">
    <property type="entry name" value="Ribosomal_uL1_3-a/b-sand"/>
</dbReference>
<dbReference type="InterPro" id="IPR023673">
    <property type="entry name" value="Ribosomal_uL1_CS"/>
</dbReference>
<dbReference type="NCBIfam" id="TIGR01169">
    <property type="entry name" value="rplA_bact"/>
    <property type="match status" value="1"/>
</dbReference>
<dbReference type="PANTHER" id="PTHR36427">
    <property type="entry name" value="54S RIBOSOMAL PROTEIN L1, MITOCHONDRIAL"/>
    <property type="match status" value="1"/>
</dbReference>
<dbReference type="PANTHER" id="PTHR36427:SF3">
    <property type="entry name" value="LARGE RIBOSOMAL SUBUNIT PROTEIN UL1M"/>
    <property type="match status" value="1"/>
</dbReference>
<dbReference type="Pfam" id="PF00687">
    <property type="entry name" value="Ribosomal_L1"/>
    <property type="match status" value="1"/>
</dbReference>
<dbReference type="PIRSF" id="PIRSF002155">
    <property type="entry name" value="Ribosomal_L1"/>
    <property type="match status" value="1"/>
</dbReference>
<dbReference type="SUPFAM" id="SSF56808">
    <property type="entry name" value="Ribosomal protein L1"/>
    <property type="match status" value="1"/>
</dbReference>
<dbReference type="PROSITE" id="PS01199">
    <property type="entry name" value="RIBOSOMAL_L1"/>
    <property type="match status" value="1"/>
</dbReference>
<proteinExistence type="inferred from homology"/>
<reference key="1">
    <citation type="journal article" date="2004" name="Proc. Natl. Acad. Sci. U.S.A.">
        <title>Insights into the evolution of Yersinia pestis through whole-genome comparison with Yersinia pseudotuberculosis.</title>
        <authorList>
            <person name="Chain P.S.G."/>
            <person name="Carniel E."/>
            <person name="Larimer F.W."/>
            <person name="Lamerdin J."/>
            <person name="Stoutland P.O."/>
            <person name="Regala W.M."/>
            <person name="Georgescu A.M."/>
            <person name="Vergez L.M."/>
            <person name="Land M.L."/>
            <person name="Motin V.L."/>
            <person name="Brubaker R.R."/>
            <person name="Fowler J."/>
            <person name="Hinnebusch J."/>
            <person name="Marceau M."/>
            <person name="Medigue C."/>
            <person name="Simonet M."/>
            <person name="Chenal-Francisque V."/>
            <person name="Souza B."/>
            <person name="Dacheux D."/>
            <person name="Elliott J.M."/>
            <person name="Derbise A."/>
            <person name="Hauser L.J."/>
            <person name="Garcia E."/>
        </authorList>
    </citation>
    <scope>NUCLEOTIDE SEQUENCE [LARGE SCALE GENOMIC DNA]</scope>
    <source>
        <strain>IP32953</strain>
    </source>
</reference>
<accession>Q66FQ5</accession>
<feature type="chain" id="PRO_0000125783" description="Large ribosomal subunit protein uL1">
    <location>
        <begin position="1"/>
        <end position="234"/>
    </location>
</feature>
<comment type="function">
    <text evidence="1">Binds directly to 23S rRNA. The L1 stalk is quite mobile in the ribosome, and is involved in E site tRNA release.</text>
</comment>
<comment type="function">
    <text evidence="1">Protein L1 is also a translational repressor protein, it controls the translation of the L11 operon by binding to its mRNA.</text>
</comment>
<comment type="subunit">
    <text evidence="1">Part of the 50S ribosomal subunit.</text>
</comment>
<comment type="similarity">
    <text evidence="1">Belongs to the universal ribosomal protein uL1 family.</text>
</comment>
<name>RL1_YERPS</name>
<organism>
    <name type="scientific">Yersinia pseudotuberculosis serotype I (strain IP32953)</name>
    <dbReference type="NCBI Taxonomy" id="273123"/>
    <lineage>
        <taxon>Bacteria</taxon>
        <taxon>Pseudomonadati</taxon>
        <taxon>Pseudomonadota</taxon>
        <taxon>Gammaproteobacteria</taxon>
        <taxon>Enterobacterales</taxon>
        <taxon>Yersiniaceae</taxon>
        <taxon>Yersinia</taxon>
    </lineage>
</organism>